<keyword id="KW-0413">Isomerase</keyword>
<keyword id="KW-0460">Magnesium</keyword>
<keyword id="KW-0479">Metal-binding</keyword>
<keyword id="KW-0597">Phosphoprotein</keyword>
<keyword id="KW-1185">Reference proteome</keyword>
<evidence type="ECO:0000255" key="1">
    <source>
        <dbReference type="HAMAP-Rule" id="MF_01554"/>
    </source>
</evidence>
<organism>
    <name type="scientific">Myxococcus xanthus (strain DK1622)</name>
    <dbReference type="NCBI Taxonomy" id="246197"/>
    <lineage>
        <taxon>Bacteria</taxon>
        <taxon>Pseudomonadati</taxon>
        <taxon>Myxococcota</taxon>
        <taxon>Myxococcia</taxon>
        <taxon>Myxococcales</taxon>
        <taxon>Cystobacterineae</taxon>
        <taxon>Myxococcaceae</taxon>
        <taxon>Myxococcus</taxon>
    </lineage>
</organism>
<reference key="1">
    <citation type="journal article" date="2006" name="Proc. Natl. Acad. Sci. U.S.A.">
        <title>Evolution of sensory complexity recorded in a myxobacterial genome.</title>
        <authorList>
            <person name="Goldman B.S."/>
            <person name="Nierman W.C."/>
            <person name="Kaiser D."/>
            <person name="Slater S.C."/>
            <person name="Durkin A.S."/>
            <person name="Eisen J.A."/>
            <person name="Ronning C.M."/>
            <person name="Barbazuk W.B."/>
            <person name="Blanchard M."/>
            <person name="Field C."/>
            <person name="Halling C."/>
            <person name="Hinkle G."/>
            <person name="Iartchuk O."/>
            <person name="Kim H.S."/>
            <person name="Mackenzie C."/>
            <person name="Madupu R."/>
            <person name="Miller N."/>
            <person name="Shvartsbeyn A."/>
            <person name="Sullivan S.A."/>
            <person name="Vaudin M."/>
            <person name="Wiegand R."/>
            <person name="Kaplan H.B."/>
        </authorList>
    </citation>
    <scope>NUCLEOTIDE SEQUENCE [LARGE SCALE GENOMIC DNA]</scope>
    <source>
        <strain>DK1622</strain>
    </source>
</reference>
<gene>
    <name evidence="1" type="primary">glmM</name>
    <name type="ordered locus">MXAN_4352</name>
</gene>
<name>GLMM_MYXXD</name>
<accession>Q1D498</accession>
<sequence>MPPKEAQASQKLFGTDGVRGKANVYPMTAEVAMQLGRALAFLIRNGPHRHRVIVGKDTRLSGYMLEQALASGLTSMGVDVELVGPLPTPGISNITTSMRADAGAVISASHNPYEDNGIKFFWRDGFKLPDETEGKIEELVSSGSIDSIRPTATKIGRAFRMEDARGRYIVFLKATFPRELTLEGMTIVVDCANGAAYKTAPAVLEELGAKVIALGVSPDGKNINHKCGALYPENLAKTVVKHGAHLGIALDGDADRLIVVDEKGKVVDGDAIMAICTGELVARKQLKKKMLVSTVMSNIGLERAVARWGVKVARTRVGDRYVVDEMRRNGYNLGGEQSGHLIFLDHTTTGDGTLAALQLLAVMCRAGKPLSELASIFEPVPQTLVNVVVKQKKELGELPTVMKVIKSVEQRLGNTGRVLVRFSGTEPKARVLIEGEDAARNQAYAKEIADALSKALSV</sequence>
<feature type="chain" id="PRO_0000305656" description="Phosphoglucosamine mutase">
    <location>
        <begin position="1"/>
        <end position="458"/>
    </location>
</feature>
<feature type="active site" description="Phosphoserine intermediate" evidence="1">
    <location>
        <position position="109"/>
    </location>
</feature>
<feature type="binding site" description="via phosphate group" evidence="1">
    <location>
        <position position="109"/>
    </location>
    <ligand>
        <name>Mg(2+)</name>
        <dbReference type="ChEBI" id="CHEBI:18420"/>
    </ligand>
</feature>
<feature type="binding site" evidence="1">
    <location>
        <position position="251"/>
    </location>
    <ligand>
        <name>Mg(2+)</name>
        <dbReference type="ChEBI" id="CHEBI:18420"/>
    </ligand>
</feature>
<feature type="binding site" evidence="1">
    <location>
        <position position="253"/>
    </location>
    <ligand>
        <name>Mg(2+)</name>
        <dbReference type="ChEBI" id="CHEBI:18420"/>
    </ligand>
</feature>
<feature type="binding site" evidence="1">
    <location>
        <position position="255"/>
    </location>
    <ligand>
        <name>Mg(2+)</name>
        <dbReference type="ChEBI" id="CHEBI:18420"/>
    </ligand>
</feature>
<feature type="modified residue" description="Phosphoserine" evidence="1">
    <location>
        <position position="109"/>
    </location>
</feature>
<proteinExistence type="inferred from homology"/>
<dbReference type="EC" id="5.4.2.10" evidence="1"/>
<dbReference type="EMBL" id="CP000113">
    <property type="protein sequence ID" value="ABF89639.1"/>
    <property type="molecule type" value="Genomic_DNA"/>
</dbReference>
<dbReference type="SMR" id="Q1D498"/>
<dbReference type="STRING" id="246197.MXAN_4352"/>
<dbReference type="EnsemblBacteria" id="ABF89639">
    <property type="protein sequence ID" value="ABF89639"/>
    <property type="gene ID" value="MXAN_4352"/>
</dbReference>
<dbReference type="KEGG" id="mxa:MXAN_4352"/>
<dbReference type="eggNOG" id="COG1109">
    <property type="taxonomic scope" value="Bacteria"/>
</dbReference>
<dbReference type="HOGENOM" id="CLU_016950_7_0_7"/>
<dbReference type="Proteomes" id="UP000002402">
    <property type="component" value="Chromosome"/>
</dbReference>
<dbReference type="GO" id="GO:0005829">
    <property type="term" value="C:cytosol"/>
    <property type="evidence" value="ECO:0007669"/>
    <property type="project" value="TreeGrafter"/>
</dbReference>
<dbReference type="GO" id="GO:0000287">
    <property type="term" value="F:magnesium ion binding"/>
    <property type="evidence" value="ECO:0007669"/>
    <property type="project" value="UniProtKB-UniRule"/>
</dbReference>
<dbReference type="GO" id="GO:0008966">
    <property type="term" value="F:phosphoglucosamine mutase activity"/>
    <property type="evidence" value="ECO:0007669"/>
    <property type="project" value="UniProtKB-UniRule"/>
</dbReference>
<dbReference type="GO" id="GO:0004615">
    <property type="term" value="F:phosphomannomutase activity"/>
    <property type="evidence" value="ECO:0007669"/>
    <property type="project" value="TreeGrafter"/>
</dbReference>
<dbReference type="GO" id="GO:0005975">
    <property type="term" value="P:carbohydrate metabolic process"/>
    <property type="evidence" value="ECO:0007669"/>
    <property type="project" value="InterPro"/>
</dbReference>
<dbReference type="GO" id="GO:0009252">
    <property type="term" value="P:peptidoglycan biosynthetic process"/>
    <property type="evidence" value="ECO:0007669"/>
    <property type="project" value="TreeGrafter"/>
</dbReference>
<dbReference type="GO" id="GO:0006048">
    <property type="term" value="P:UDP-N-acetylglucosamine biosynthetic process"/>
    <property type="evidence" value="ECO:0007669"/>
    <property type="project" value="TreeGrafter"/>
</dbReference>
<dbReference type="CDD" id="cd05802">
    <property type="entry name" value="GlmM"/>
    <property type="match status" value="1"/>
</dbReference>
<dbReference type="FunFam" id="3.30.310.50:FF:000001">
    <property type="entry name" value="Phosphoglucosamine mutase"/>
    <property type="match status" value="1"/>
</dbReference>
<dbReference type="FunFam" id="3.40.120.10:FF:000001">
    <property type="entry name" value="Phosphoglucosamine mutase"/>
    <property type="match status" value="1"/>
</dbReference>
<dbReference type="FunFam" id="3.40.120.10:FF:000002">
    <property type="entry name" value="Phosphoglucosamine mutase"/>
    <property type="match status" value="1"/>
</dbReference>
<dbReference type="Gene3D" id="3.40.120.10">
    <property type="entry name" value="Alpha-D-Glucose-1,6-Bisphosphate, subunit A, domain 3"/>
    <property type="match status" value="3"/>
</dbReference>
<dbReference type="Gene3D" id="3.30.310.50">
    <property type="entry name" value="Alpha-D-phosphohexomutase, C-terminal domain"/>
    <property type="match status" value="1"/>
</dbReference>
<dbReference type="HAMAP" id="MF_01554_B">
    <property type="entry name" value="GlmM_B"/>
    <property type="match status" value="1"/>
</dbReference>
<dbReference type="InterPro" id="IPR005844">
    <property type="entry name" value="A-D-PHexomutase_a/b/a-I"/>
</dbReference>
<dbReference type="InterPro" id="IPR016055">
    <property type="entry name" value="A-D-PHexomutase_a/b/a-I/II/III"/>
</dbReference>
<dbReference type="InterPro" id="IPR005845">
    <property type="entry name" value="A-D-PHexomutase_a/b/a-II"/>
</dbReference>
<dbReference type="InterPro" id="IPR005846">
    <property type="entry name" value="A-D-PHexomutase_a/b/a-III"/>
</dbReference>
<dbReference type="InterPro" id="IPR005843">
    <property type="entry name" value="A-D-PHexomutase_C"/>
</dbReference>
<dbReference type="InterPro" id="IPR036900">
    <property type="entry name" value="A-D-PHexomutase_C_sf"/>
</dbReference>
<dbReference type="InterPro" id="IPR005841">
    <property type="entry name" value="Alpha-D-phosphohexomutase_SF"/>
</dbReference>
<dbReference type="InterPro" id="IPR006352">
    <property type="entry name" value="GlmM_bact"/>
</dbReference>
<dbReference type="InterPro" id="IPR050060">
    <property type="entry name" value="Phosphoglucosamine_mutase"/>
</dbReference>
<dbReference type="NCBIfam" id="TIGR01455">
    <property type="entry name" value="glmM"/>
    <property type="match status" value="1"/>
</dbReference>
<dbReference type="NCBIfam" id="NF008139">
    <property type="entry name" value="PRK10887.1"/>
    <property type="match status" value="1"/>
</dbReference>
<dbReference type="PANTHER" id="PTHR42946:SF1">
    <property type="entry name" value="PHOSPHOGLUCOMUTASE (ALPHA-D-GLUCOSE-1,6-BISPHOSPHATE-DEPENDENT)"/>
    <property type="match status" value="1"/>
</dbReference>
<dbReference type="PANTHER" id="PTHR42946">
    <property type="entry name" value="PHOSPHOHEXOSE MUTASE"/>
    <property type="match status" value="1"/>
</dbReference>
<dbReference type="Pfam" id="PF02878">
    <property type="entry name" value="PGM_PMM_I"/>
    <property type="match status" value="1"/>
</dbReference>
<dbReference type="Pfam" id="PF02879">
    <property type="entry name" value="PGM_PMM_II"/>
    <property type="match status" value="1"/>
</dbReference>
<dbReference type="Pfam" id="PF02880">
    <property type="entry name" value="PGM_PMM_III"/>
    <property type="match status" value="1"/>
</dbReference>
<dbReference type="Pfam" id="PF00408">
    <property type="entry name" value="PGM_PMM_IV"/>
    <property type="match status" value="1"/>
</dbReference>
<dbReference type="PRINTS" id="PR00509">
    <property type="entry name" value="PGMPMM"/>
</dbReference>
<dbReference type="SUPFAM" id="SSF55957">
    <property type="entry name" value="Phosphoglucomutase, C-terminal domain"/>
    <property type="match status" value="1"/>
</dbReference>
<dbReference type="SUPFAM" id="SSF53738">
    <property type="entry name" value="Phosphoglucomutase, first 3 domains"/>
    <property type="match status" value="3"/>
</dbReference>
<comment type="function">
    <text evidence="1">Catalyzes the conversion of glucosamine-6-phosphate to glucosamine-1-phosphate.</text>
</comment>
<comment type="catalytic activity">
    <reaction evidence="1">
        <text>alpha-D-glucosamine 1-phosphate = D-glucosamine 6-phosphate</text>
        <dbReference type="Rhea" id="RHEA:23424"/>
        <dbReference type="ChEBI" id="CHEBI:58516"/>
        <dbReference type="ChEBI" id="CHEBI:58725"/>
        <dbReference type="EC" id="5.4.2.10"/>
    </reaction>
</comment>
<comment type="cofactor">
    <cofactor evidence="1">
        <name>Mg(2+)</name>
        <dbReference type="ChEBI" id="CHEBI:18420"/>
    </cofactor>
    <text evidence="1">Binds 1 Mg(2+) ion per subunit.</text>
</comment>
<comment type="PTM">
    <text evidence="1">Activated by phosphorylation.</text>
</comment>
<comment type="similarity">
    <text evidence="1">Belongs to the phosphohexose mutase family.</text>
</comment>
<protein>
    <recommendedName>
        <fullName evidence="1">Phosphoglucosamine mutase</fullName>
        <ecNumber evidence="1">5.4.2.10</ecNumber>
    </recommendedName>
</protein>